<evidence type="ECO:0000255" key="1">
    <source>
        <dbReference type="HAMAP-Rule" id="MF_01246"/>
    </source>
</evidence>
<evidence type="ECO:0007829" key="2">
    <source>
        <dbReference type="PDB" id="7VI8"/>
    </source>
</evidence>
<protein>
    <recommendedName>
        <fullName evidence="1">Chitooligosaccharide deacetylase</fullName>
        <shortName evidence="1">COD</shortName>
        <ecNumber evidence="1">3.5.1.105</ecNumber>
    </recommendedName>
    <alternativeName>
        <fullName evidence="1">Chitin disaccharide deacetylase</fullName>
    </alternativeName>
    <alternativeName>
        <fullName evidence="1">Chitobiose deacetylase</fullName>
    </alternativeName>
    <alternativeName>
        <fullName evidence="1">Chitobiose-6P deacetylase</fullName>
    </alternativeName>
    <alternativeName>
        <fullName evidence="1">Chitotriose deacetylase</fullName>
    </alternativeName>
    <alternativeName>
        <fullName evidence="1">Chitotriose-6P deacetylase</fullName>
    </alternativeName>
</protein>
<reference key="1">
    <citation type="submission" date="2006-09" db="EMBL/GenBank/DDBJ databases">
        <authorList>
            <consortium name="The Klebsiella pneumonia Genome Sequencing Project"/>
            <person name="McClelland M."/>
            <person name="Sanderson E.K."/>
            <person name="Spieth J."/>
            <person name="Clifton W.S."/>
            <person name="Latreille P."/>
            <person name="Sabo A."/>
            <person name="Pepin K."/>
            <person name="Bhonagiri V."/>
            <person name="Porwollik S."/>
            <person name="Ali J."/>
            <person name="Wilson R.K."/>
        </authorList>
    </citation>
    <scope>NUCLEOTIDE SEQUENCE [LARGE SCALE GENOMIC DNA]</scope>
    <source>
        <strain>ATCC 700721 / MGH 78578</strain>
    </source>
</reference>
<dbReference type="EC" id="3.5.1.105" evidence="1"/>
<dbReference type="EMBL" id="CP000647">
    <property type="protein sequence ID" value="ABR76668.1"/>
    <property type="molecule type" value="Genomic_DNA"/>
</dbReference>
<dbReference type="RefSeq" id="WP_009486060.1">
    <property type="nucleotide sequence ID" value="NC_009648.1"/>
</dbReference>
<dbReference type="PDB" id="7VI8">
    <property type="method" value="X-ray"/>
    <property type="resolution" value="1.83 A"/>
    <property type="chains" value="A/B=1-252"/>
</dbReference>
<dbReference type="PDBsum" id="7VI8"/>
<dbReference type="SMR" id="A6T7U7"/>
<dbReference type="STRING" id="272620.KPN_01235"/>
<dbReference type="PaxDb" id="272620-KPN_01235"/>
<dbReference type="EnsemblBacteria" id="ABR76668">
    <property type="protein sequence ID" value="ABR76668"/>
    <property type="gene ID" value="KPN_01235"/>
</dbReference>
<dbReference type="KEGG" id="kpn:KPN_01235"/>
<dbReference type="HOGENOM" id="CLU_064244_4_1_6"/>
<dbReference type="UniPathway" id="UPA00349"/>
<dbReference type="Proteomes" id="UP000000265">
    <property type="component" value="Chromosome"/>
</dbReference>
<dbReference type="GO" id="GO:0005737">
    <property type="term" value="C:cytoplasm"/>
    <property type="evidence" value="ECO:0007669"/>
    <property type="project" value="UniProtKB-SubCell"/>
</dbReference>
<dbReference type="GO" id="GO:0036311">
    <property type="term" value="F:chitin disaccharide deacetylase activity"/>
    <property type="evidence" value="ECO:0007669"/>
    <property type="project" value="UniProtKB-UniRule"/>
</dbReference>
<dbReference type="GO" id="GO:0019213">
    <property type="term" value="F:deacetylase activity"/>
    <property type="evidence" value="ECO:0007669"/>
    <property type="project" value="TreeGrafter"/>
</dbReference>
<dbReference type="GO" id="GO:0046872">
    <property type="term" value="F:metal ion binding"/>
    <property type="evidence" value="ECO:0007669"/>
    <property type="project" value="UniProtKB-KW"/>
</dbReference>
<dbReference type="GO" id="GO:0006032">
    <property type="term" value="P:chitin catabolic process"/>
    <property type="evidence" value="ECO:0007669"/>
    <property type="project" value="UniProtKB-UniPathway"/>
</dbReference>
<dbReference type="GO" id="GO:0052777">
    <property type="term" value="P:diacetylchitobiose catabolic process"/>
    <property type="evidence" value="ECO:0007669"/>
    <property type="project" value="UniProtKB-UniRule"/>
</dbReference>
<dbReference type="GO" id="GO:0000272">
    <property type="term" value="P:polysaccharide catabolic process"/>
    <property type="evidence" value="ECO:0007669"/>
    <property type="project" value="UniProtKB-UniRule"/>
</dbReference>
<dbReference type="CDD" id="cd10803">
    <property type="entry name" value="YdjC_EF3048_like"/>
    <property type="match status" value="1"/>
</dbReference>
<dbReference type="FunFam" id="3.20.20.370:FF:000001">
    <property type="entry name" value="Chitooligosaccharide deacetylase"/>
    <property type="match status" value="1"/>
</dbReference>
<dbReference type="Gene3D" id="3.20.20.370">
    <property type="entry name" value="Glycoside hydrolase/deacetylase"/>
    <property type="match status" value="1"/>
</dbReference>
<dbReference type="HAMAP" id="MF_01246">
    <property type="entry name" value="COD"/>
    <property type="match status" value="1"/>
</dbReference>
<dbReference type="InterPro" id="IPR022948">
    <property type="entry name" value="COD_ChbG_bac"/>
</dbReference>
<dbReference type="InterPro" id="IPR011330">
    <property type="entry name" value="Glyco_hydro/deAcase_b/a-brl"/>
</dbReference>
<dbReference type="InterPro" id="IPR006879">
    <property type="entry name" value="YdjC-like"/>
</dbReference>
<dbReference type="NCBIfam" id="NF002559">
    <property type="entry name" value="PRK02134.1"/>
    <property type="match status" value="1"/>
</dbReference>
<dbReference type="PANTHER" id="PTHR31609:SF1">
    <property type="entry name" value="CARBOHYDRATE DEACETYLASE"/>
    <property type="match status" value="1"/>
</dbReference>
<dbReference type="PANTHER" id="PTHR31609">
    <property type="entry name" value="YDJC DEACETYLASE FAMILY MEMBER"/>
    <property type="match status" value="1"/>
</dbReference>
<dbReference type="Pfam" id="PF04794">
    <property type="entry name" value="YdjC"/>
    <property type="match status" value="1"/>
</dbReference>
<dbReference type="SUPFAM" id="SSF88713">
    <property type="entry name" value="Glycoside hydrolase/deacetylase"/>
    <property type="match status" value="1"/>
</dbReference>
<sequence length="252" mass="27685">MERVLIVNADDFGLSKGQNYGIIEACRNGVVTSTTALVNGAAIDHAAQLGRSTPELAVGMHFVLTLGEPLSAMPGLTRDGRLGKWIWQQAEEDSLPLEEIAHELACQYHRFVELFGHEPTHIDSHHHVHMFAQIYPIVAAFAREKGIALRIDRQVAAQSGLDQQAARSSAGFSSEFYGEAVSEELFLQTLDASIARGERSLEVMCHPAYVDRIIMGSAYCYPRLDELDVLTAASLKAAVADRGYRLGTYRDV</sequence>
<comment type="function">
    <text evidence="1">Involved in the degradation of chitin. ChbG is essential for growth on the acetylated chitooligosaccharides chitobiose and chitotriose but is dispensable for growth on cellobiose and chitosan dimer, the deacetylated form of chitobiose. Deacetylation of chitobiose-6-P and chitotriose-6-P is necessary for both the activation of the chb promoter by the regulatory protein ChbR and the hydrolysis of phosphorylated beta-glucosides by the phospho-beta-glucosidase ChbF. Catalyzes the removal of only one acetyl group from chitobiose-6-P to yield monoacetylchitobiose-6-P, the inducer of ChbR and the substrate of ChbF.</text>
</comment>
<comment type="catalytic activity">
    <reaction evidence="1">
        <text>N,N'-diacetylchitobiose + H2O = N-acetyl-beta-D-glucosaminyl-(1-&gt;4)-D-glucosamine + acetate</text>
        <dbReference type="Rhea" id="RHEA:27469"/>
        <dbReference type="ChEBI" id="CHEBI:15377"/>
        <dbReference type="ChEBI" id="CHEBI:28681"/>
        <dbReference type="ChEBI" id="CHEBI:30089"/>
        <dbReference type="ChEBI" id="CHEBI:59910"/>
        <dbReference type="EC" id="3.5.1.105"/>
    </reaction>
</comment>
<comment type="catalytic activity">
    <reaction evidence="1">
        <text>diacetylchitobiose-6'-phosphate + H2O = N'-monoacetylchitobiose-6'-phosphate + acetate</text>
        <dbReference type="Rhea" id="RHEA:35083"/>
        <dbReference type="ChEBI" id="CHEBI:15377"/>
        <dbReference type="ChEBI" id="CHEBI:30089"/>
        <dbReference type="ChEBI" id="CHEBI:64883"/>
        <dbReference type="ChEBI" id="CHEBI:71315"/>
    </reaction>
</comment>
<comment type="cofactor">
    <cofactor evidence="1">
        <name>Mg(2+)</name>
        <dbReference type="ChEBI" id="CHEBI:18420"/>
    </cofactor>
</comment>
<comment type="pathway">
    <text evidence="1">Glycan degradation; chitin degradation.</text>
</comment>
<comment type="subunit">
    <text evidence="1">Homodimer.</text>
</comment>
<comment type="subcellular location">
    <subcellularLocation>
        <location evidence="1">Cytoplasm</location>
    </subcellularLocation>
</comment>
<comment type="similarity">
    <text evidence="1">Belongs to the YdjC deacetylase family. ChbG subfamily.</text>
</comment>
<organism>
    <name type="scientific">Klebsiella pneumoniae subsp. pneumoniae (strain ATCC 700721 / MGH 78578)</name>
    <dbReference type="NCBI Taxonomy" id="272620"/>
    <lineage>
        <taxon>Bacteria</taxon>
        <taxon>Pseudomonadati</taxon>
        <taxon>Pseudomonadota</taxon>
        <taxon>Gammaproteobacteria</taxon>
        <taxon>Enterobacterales</taxon>
        <taxon>Enterobacteriaceae</taxon>
        <taxon>Klebsiella/Raoultella group</taxon>
        <taxon>Klebsiella</taxon>
        <taxon>Klebsiella pneumoniae complex</taxon>
    </lineage>
</organism>
<feature type="chain" id="PRO_1000067084" description="Chitooligosaccharide deacetylase">
    <location>
        <begin position="1"/>
        <end position="252"/>
    </location>
</feature>
<feature type="binding site" evidence="1">
    <location>
        <position position="61"/>
    </location>
    <ligand>
        <name>Mg(2+)</name>
        <dbReference type="ChEBI" id="CHEBI:18420"/>
    </ligand>
</feature>
<feature type="binding site" evidence="1">
    <location>
        <position position="125"/>
    </location>
    <ligand>
        <name>Mg(2+)</name>
        <dbReference type="ChEBI" id="CHEBI:18420"/>
    </ligand>
</feature>
<feature type="strand" evidence="2">
    <location>
        <begin position="3"/>
        <end position="12"/>
    </location>
</feature>
<feature type="helix" evidence="2">
    <location>
        <begin position="16"/>
        <end position="27"/>
    </location>
</feature>
<feature type="strand" evidence="2">
    <location>
        <begin position="33"/>
        <end position="36"/>
    </location>
</feature>
<feature type="helix" evidence="2">
    <location>
        <begin position="43"/>
        <end position="51"/>
    </location>
</feature>
<feature type="strand" evidence="2">
    <location>
        <begin position="56"/>
        <end position="62"/>
    </location>
</feature>
<feature type="strand" evidence="2">
    <location>
        <begin position="64"/>
        <end position="67"/>
    </location>
</feature>
<feature type="turn" evidence="2">
    <location>
        <begin position="74"/>
        <end position="76"/>
    </location>
</feature>
<feature type="helix" evidence="2">
    <location>
        <begin position="86"/>
        <end position="91"/>
    </location>
</feature>
<feature type="helix" evidence="2">
    <location>
        <begin position="97"/>
        <end position="115"/>
    </location>
</feature>
<feature type="strand" evidence="2">
    <location>
        <begin position="120"/>
        <end position="124"/>
    </location>
</feature>
<feature type="helix" evidence="2">
    <location>
        <begin position="125"/>
        <end position="130"/>
    </location>
</feature>
<feature type="turn" evidence="2">
    <location>
        <begin position="132"/>
        <end position="134"/>
    </location>
</feature>
<feature type="helix" evidence="2">
    <location>
        <begin position="135"/>
        <end position="145"/>
    </location>
</feature>
<feature type="helix" evidence="2">
    <location>
        <begin position="153"/>
        <end position="158"/>
    </location>
</feature>
<feature type="strand" evidence="2">
    <location>
        <begin position="170"/>
        <end position="173"/>
    </location>
</feature>
<feature type="helix" evidence="2">
    <location>
        <begin position="183"/>
        <end position="195"/>
    </location>
</feature>
<feature type="strand" evidence="2">
    <location>
        <begin position="199"/>
        <end position="205"/>
    </location>
</feature>
<feature type="helix" evidence="2">
    <location>
        <begin position="212"/>
        <end position="215"/>
    </location>
</feature>
<feature type="strand" evidence="2">
    <location>
        <begin position="217"/>
        <end position="219"/>
    </location>
</feature>
<feature type="helix" evidence="2">
    <location>
        <begin position="222"/>
        <end position="231"/>
    </location>
</feature>
<feature type="helix" evidence="2">
    <location>
        <begin position="233"/>
        <end position="241"/>
    </location>
</feature>
<feature type="strand" evidence="2">
    <location>
        <begin position="244"/>
        <end position="247"/>
    </location>
</feature>
<feature type="helix" evidence="2">
    <location>
        <begin position="249"/>
        <end position="251"/>
    </location>
</feature>
<accession>A6T7U7</accession>
<proteinExistence type="evidence at protein level"/>
<name>CHBG_KLEP7</name>
<gene>
    <name evidence="1" type="primary">chbG</name>
    <name type="ordered locus">KPN78578_12070</name>
    <name type="ORF">KPN_01235</name>
</gene>
<keyword id="KW-0002">3D-structure</keyword>
<keyword id="KW-0119">Carbohydrate metabolism</keyword>
<keyword id="KW-0146">Chitin degradation</keyword>
<keyword id="KW-0963">Cytoplasm</keyword>
<keyword id="KW-0378">Hydrolase</keyword>
<keyword id="KW-0460">Magnesium</keyword>
<keyword id="KW-0479">Metal-binding</keyword>
<keyword id="KW-0624">Polysaccharide degradation</keyword>